<dbReference type="EC" id="4.2.1.41" evidence="1"/>
<dbReference type="EMBL" id="CP001151">
    <property type="protein sequence ID" value="ACM03049.1"/>
    <property type="molecule type" value="Genomic_DNA"/>
</dbReference>
<dbReference type="RefSeq" id="WP_012640837.1">
    <property type="nucleotide sequence ID" value="NC_011958.1"/>
</dbReference>
<dbReference type="SMR" id="B9KW45"/>
<dbReference type="GeneID" id="67448539"/>
<dbReference type="KEGG" id="rsk:RSKD131_3189"/>
<dbReference type="HOGENOM" id="CLU_049343_5_2_5"/>
<dbReference type="UniPathway" id="UPA00564">
    <property type="reaction ID" value="UER00628"/>
</dbReference>
<dbReference type="GO" id="GO:0008840">
    <property type="term" value="F:4-hydroxy-tetrahydrodipicolinate synthase activity"/>
    <property type="evidence" value="ECO:0007669"/>
    <property type="project" value="TreeGrafter"/>
</dbReference>
<dbReference type="GO" id="GO:0047448">
    <property type="term" value="F:5-dehydro-4-deoxyglucarate dehydratase activity"/>
    <property type="evidence" value="ECO:0007669"/>
    <property type="project" value="UniProtKB-UniRule"/>
</dbReference>
<dbReference type="GO" id="GO:0042838">
    <property type="term" value="P:D-glucarate catabolic process"/>
    <property type="evidence" value="ECO:0007669"/>
    <property type="project" value="UniProtKB-UniRule"/>
</dbReference>
<dbReference type="CDD" id="cd00951">
    <property type="entry name" value="KDGDH"/>
    <property type="match status" value="1"/>
</dbReference>
<dbReference type="Gene3D" id="3.20.20.70">
    <property type="entry name" value="Aldolase class I"/>
    <property type="match status" value="1"/>
</dbReference>
<dbReference type="HAMAP" id="MF_00694">
    <property type="entry name" value="KDGDH"/>
    <property type="match status" value="1"/>
</dbReference>
<dbReference type="InterPro" id="IPR013785">
    <property type="entry name" value="Aldolase_TIM"/>
</dbReference>
<dbReference type="InterPro" id="IPR002220">
    <property type="entry name" value="DapA-like"/>
</dbReference>
<dbReference type="InterPro" id="IPR017655">
    <property type="entry name" value="Dehydro-deoxyglucarate_dehyd"/>
</dbReference>
<dbReference type="NCBIfam" id="TIGR03249">
    <property type="entry name" value="KdgD"/>
    <property type="match status" value="1"/>
</dbReference>
<dbReference type="NCBIfam" id="NF002958">
    <property type="entry name" value="PRK03620.1"/>
    <property type="match status" value="1"/>
</dbReference>
<dbReference type="PANTHER" id="PTHR12128:SF19">
    <property type="entry name" value="5-DEHYDRO-4-DEOXYGLUCARATE DEHYDRATASE 2-RELATED"/>
    <property type="match status" value="1"/>
</dbReference>
<dbReference type="PANTHER" id="PTHR12128">
    <property type="entry name" value="DIHYDRODIPICOLINATE SYNTHASE"/>
    <property type="match status" value="1"/>
</dbReference>
<dbReference type="Pfam" id="PF00701">
    <property type="entry name" value="DHDPS"/>
    <property type="match status" value="1"/>
</dbReference>
<dbReference type="PIRSF" id="PIRSF001365">
    <property type="entry name" value="DHDPS"/>
    <property type="match status" value="1"/>
</dbReference>
<dbReference type="SMART" id="SM01130">
    <property type="entry name" value="DHDPS"/>
    <property type="match status" value="1"/>
</dbReference>
<dbReference type="SUPFAM" id="SSF51569">
    <property type="entry name" value="Aldolase"/>
    <property type="match status" value="1"/>
</dbReference>
<name>KDGD_CERSK</name>
<feature type="chain" id="PRO_1000147909" description="Probable 5-dehydro-4-deoxyglucarate dehydratase">
    <location>
        <begin position="1"/>
        <end position="301"/>
    </location>
</feature>
<organism>
    <name type="scientific">Cereibacter sphaeroides (strain KD131 / KCTC 12085)</name>
    <name type="common">Rhodobacter sphaeroides</name>
    <dbReference type="NCBI Taxonomy" id="557760"/>
    <lineage>
        <taxon>Bacteria</taxon>
        <taxon>Pseudomonadati</taxon>
        <taxon>Pseudomonadota</taxon>
        <taxon>Alphaproteobacteria</taxon>
        <taxon>Rhodobacterales</taxon>
        <taxon>Paracoccaceae</taxon>
        <taxon>Cereibacter</taxon>
    </lineage>
</organism>
<keyword id="KW-0456">Lyase</keyword>
<evidence type="ECO:0000255" key="1">
    <source>
        <dbReference type="HAMAP-Rule" id="MF_00694"/>
    </source>
</evidence>
<proteinExistence type="inferred from homology"/>
<comment type="catalytic activity">
    <reaction evidence="1">
        <text>5-dehydro-4-deoxy-D-glucarate + H(+) = 2,5-dioxopentanoate + CO2 + H2O</text>
        <dbReference type="Rhea" id="RHEA:24608"/>
        <dbReference type="ChEBI" id="CHEBI:15377"/>
        <dbReference type="ChEBI" id="CHEBI:15378"/>
        <dbReference type="ChEBI" id="CHEBI:16526"/>
        <dbReference type="ChEBI" id="CHEBI:42819"/>
        <dbReference type="ChEBI" id="CHEBI:58136"/>
        <dbReference type="EC" id="4.2.1.41"/>
    </reaction>
</comment>
<comment type="pathway">
    <text evidence="1">Carbohydrate acid metabolism; D-glucarate degradation; 2,5-dioxopentanoate from D-glucarate: step 2/2.</text>
</comment>
<comment type="similarity">
    <text evidence="1">Belongs to the DapA family.</text>
</comment>
<protein>
    <recommendedName>
        <fullName evidence="1">Probable 5-dehydro-4-deoxyglucarate dehydratase</fullName>
        <ecNumber evidence="1">4.2.1.41</ecNumber>
    </recommendedName>
    <alternativeName>
        <fullName evidence="1">5-keto-4-deoxy-glucarate dehydratase</fullName>
        <shortName evidence="1">KDGDH</shortName>
    </alternativeName>
</protein>
<gene>
    <name type="ordered locus">RSKD131_3189</name>
</gene>
<accession>B9KW45</accession>
<reference key="1">
    <citation type="journal article" date="2009" name="J. Bacteriol.">
        <title>Complete genome sequence of Rhodobacter sphaeroides KD131.</title>
        <authorList>
            <person name="Lim S.-K."/>
            <person name="Kim S.J."/>
            <person name="Cha S.H."/>
            <person name="Oh Y.-K."/>
            <person name="Rhee H.-J."/>
            <person name="Kim M.-S."/>
            <person name="Lee J.K."/>
        </authorList>
    </citation>
    <scope>NUCLEOTIDE SEQUENCE [LARGE SCALE GENOMIC DNA]</scope>
    <source>
        <strain>KD131 / KCTC 12085</strain>
    </source>
</reference>
<sequence>MDPQQIKAALGSGLLSFPVTPFDAENRFAAAPYQKHVEWLSGFDAPVLFAAGGTGEFFSLTPDEIPAIVRAAKESAGKTAIVSGCGYGTEIARGIARSVEAAGGDGILLLPHYLIDAPQEGLYAHVRAVCQATGMGVMVYNRDNAVLQADTLARLCDDCPNLVGFKDGTGDIGLVRQITAKMGDRLTYLGGMPTAELFAEAYLGASFTTYSSAVFNFVPALANKFYAALRAGDRATCESILNSFFYPFMELRSRRKGYAVAAVKAGVRLVGFDAGPVRAPLSDLTGEEEKILEALIDAHRE</sequence>